<gene>
    <name evidence="9" type="primary">gedL</name>
    <name type="ORF">ATEG_08460</name>
</gene>
<name>GEDL_ASPTN</name>
<accession>Q0CCX4</accession>
<reference key="1">
    <citation type="submission" date="2005-09" db="EMBL/GenBank/DDBJ databases">
        <title>Annotation of the Aspergillus terreus NIH2624 genome.</title>
        <authorList>
            <person name="Birren B.W."/>
            <person name="Lander E.S."/>
            <person name="Galagan J.E."/>
            <person name="Nusbaum C."/>
            <person name="Devon K."/>
            <person name="Henn M."/>
            <person name="Ma L.-J."/>
            <person name="Jaffe D.B."/>
            <person name="Butler J."/>
            <person name="Alvarez P."/>
            <person name="Gnerre S."/>
            <person name="Grabherr M."/>
            <person name="Kleber M."/>
            <person name="Mauceli E.W."/>
            <person name="Brockman W."/>
            <person name="Rounsley S."/>
            <person name="Young S.K."/>
            <person name="LaButti K."/>
            <person name="Pushparaj V."/>
            <person name="DeCaprio D."/>
            <person name="Crawford M."/>
            <person name="Koehrsen M."/>
            <person name="Engels R."/>
            <person name="Montgomery P."/>
            <person name="Pearson M."/>
            <person name="Howarth C."/>
            <person name="Larson L."/>
            <person name="Luoma S."/>
            <person name="White J."/>
            <person name="Alvarado L."/>
            <person name="Kodira C.D."/>
            <person name="Zeng Q."/>
            <person name="Oleary S."/>
            <person name="Yandava C."/>
            <person name="Denning D.W."/>
            <person name="Nierman W.C."/>
            <person name="Milne T."/>
            <person name="Madden K."/>
        </authorList>
    </citation>
    <scope>NUCLEOTIDE SEQUENCE [LARGE SCALE GENOMIC DNA]</scope>
    <source>
        <strain>NIH 2624 / FGSC A1156</strain>
    </source>
</reference>
<reference key="2">
    <citation type="journal article" date="1988" name="J. Biochem.">
        <title>A novel anthraquinone ring cleavage enzyme from Aspergillus terreus.</title>
        <authorList>
            <person name="Fujii I."/>
            <person name="Ebizuka Y."/>
            <person name="Sankawa U."/>
        </authorList>
    </citation>
    <scope>FUNCTION</scope>
</reference>
<reference key="3">
    <citation type="journal article" date="1991" name="Biochem. Int.">
        <title>Identification of emodinanthrone oxygenase in fungus Aspergillus terreus.</title>
        <authorList>
            <person name="Fujii I."/>
            <person name="Chen Z.G."/>
            <person name="Ebizuka Y."/>
            <person name="Sankawa U."/>
        </authorList>
    </citation>
    <scope>FUNCTION</scope>
</reference>
<reference key="4">
    <citation type="journal article" date="1992" name="Arch. Microbiol.">
        <title>Emodin O-methyltransferase from Aspergillus terreus.</title>
        <authorList>
            <person name="Chen Z.G."/>
            <person name="Fujii I."/>
            <person name="Ebizuka Y."/>
            <person name="Sankawa U."/>
        </authorList>
    </citation>
    <scope>FUNCTION</scope>
</reference>
<reference key="5">
    <citation type="journal article" date="1995" name="J. Biol. Chem.">
        <title>Molecular cloning and heterologous expression of the gene encoding dihydrogeodin oxidase, a multicopper blue enzyme from Aspergillus terreus.</title>
        <authorList>
            <person name="Huang K.X."/>
            <person name="Fujii I."/>
            <person name="Ebizuka Y."/>
            <person name="Gomi K."/>
            <person name="Sankawa U."/>
        </authorList>
    </citation>
    <scope>FUNCTION</scope>
</reference>
<reference key="6">
    <citation type="journal article" date="2003" name="Nat. Biotechnol.">
        <title>Integrating transcriptional and metabolite profiles to direct the engineering of lovastatin-producing fungal strains.</title>
        <authorList>
            <person name="Askenazi M."/>
            <person name="Driggers E.M."/>
            <person name="Holtzman D.A."/>
            <person name="Norman T.C."/>
            <person name="Iverson S."/>
            <person name="Zimmer D.P."/>
            <person name="Boers M.E."/>
            <person name="Blomquist P.R."/>
            <person name="Martinez E.J."/>
            <person name="Monreal A.W."/>
            <person name="Feibelman T.P."/>
            <person name="Mayorga M.E."/>
            <person name="Maxon M.E."/>
            <person name="Sykes K."/>
            <person name="Tobin J.V."/>
            <person name="Cordero E."/>
            <person name="Salama S.R."/>
            <person name="Trueheart J."/>
            <person name="Royer J.C."/>
            <person name="Madden K.T."/>
        </authorList>
    </citation>
    <scope>FUNCTION</scope>
</reference>
<reference key="7">
    <citation type="journal article" date="2009" name="Chem. Biol.">
        <title>Physically discrete beta-lactamase-type thioesterase catalyzes product release in atrochrysone synthesis by iterative type I polyketide synthase.</title>
        <authorList>
            <person name="Awakawa T."/>
            <person name="Yokota K."/>
            <person name="Funa N."/>
            <person name="Doi F."/>
            <person name="Mori N."/>
            <person name="Watanabe H."/>
            <person name="Horinouchi S."/>
        </authorList>
    </citation>
    <scope>FUNCTION</scope>
</reference>
<reference key="8">
    <citation type="journal article" date="2013" name="PLoS ONE">
        <title>Heterologous reconstitution of the intact geodin gene cluster in Aspergillus nidulans through a simple and versatile PCR based approach.</title>
        <authorList>
            <person name="Nielsen M.T."/>
            <person name="Nielsen J.B."/>
            <person name="Anyaogu D.C."/>
            <person name="Holm D.K."/>
            <person name="Nielsen K.F."/>
            <person name="Larsen T.O."/>
            <person name="Mortensen U.H."/>
        </authorList>
    </citation>
    <scope>GENE MODEL REVISION</scope>
    <scope>FUNCTION</scope>
    <scope>CATALYTIC ACTIVITY</scope>
</reference>
<organism>
    <name type="scientific">Aspergillus terreus (strain NIH 2624 / FGSC A1156)</name>
    <dbReference type="NCBI Taxonomy" id="341663"/>
    <lineage>
        <taxon>Eukaryota</taxon>
        <taxon>Fungi</taxon>
        <taxon>Dikarya</taxon>
        <taxon>Ascomycota</taxon>
        <taxon>Pezizomycotina</taxon>
        <taxon>Eurotiomycetes</taxon>
        <taxon>Eurotiomycetidae</taxon>
        <taxon>Eurotiales</taxon>
        <taxon>Aspergillaceae</taxon>
        <taxon>Aspergillus</taxon>
        <taxon>Aspergillus subgen. Circumdati</taxon>
    </lineage>
</organism>
<evidence type="ECO:0000250" key="1">
    <source>
        <dbReference type="UniProtKB" id="P95480"/>
    </source>
</evidence>
<evidence type="ECO:0000269" key="2">
    <source>
    </source>
</evidence>
<evidence type="ECO:0000269" key="3">
    <source>
    </source>
</evidence>
<evidence type="ECO:0000269" key="4">
    <source>
    </source>
</evidence>
<evidence type="ECO:0000269" key="5">
    <source>
    </source>
</evidence>
<evidence type="ECO:0000269" key="6">
    <source>
    </source>
</evidence>
<evidence type="ECO:0000269" key="7">
    <source>
    </source>
</evidence>
<evidence type="ECO:0000269" key="8">
    <source>
    </source>
</evidence>
<evidence type="ECO:0000303" key="9">
    <source>
    </source>
</evidence>
<evidence type="ECO:0000305" key="10"/>
<evidence type="ECO:0000305" key="11">
    <source>
    </source>
</evidence>
<comment type="function">
    <text evidence="2 3 4 5 6 7 8">Sulochrin halogenase; part of the gene cluster that mediates the biosynthesis of geodin, an intermediate in the biosynthesis of other natural products (PubMed:19549600, PubMed:24009710, PubMed:7665560). The pathway begins with the synthesis of atrochrysone thioester by the polyketide synthase (PKS) gedC (PubMed:12536215, PubMed:19549600). The atrochrysone carboxyl ACP thioesterase gedB then breaks the thioester bond and releases the atrochrysone carboxylic acid from gedC (PubMed:19549600). The atrochrysone carboxylic acid is then converted to atrochrysone which is further transformed into emodinanthrone (PubMed:24009710). The next step is performed by the emodinanthrone oxygenase gedH that catalyzes the oxidation of emodinanthrone to emodin (PubMed:1810248). Emodin O-methyltransferase encoded probably by gedA then catalyzes methylation of the 8-hydroxy group of emodin to form questin (PubMed:1444712). Ring cleavage of questin by questin oxidase gedK leads to desmethylsulochrin via several intermediates including questin epoxide (PubMed:3182756). Another methylation step probably catalyzed by methyltransferase gedG leads to the formation of sulochrin which is further converted to dihydrogeodin by the sulochrin halogenase gedL (PubMed:24009710). Finally, the dihydrogeodin oxidase gedJ catalyzes the stereospecific phenol oxidative coupling reaction converting dihydrogeodin to geodin (PubMed:7665560).</text>
</comment>
<comment type="catalytic activity">
    <reaction evidence="6">
        <text>sulochrin + 2 FADH2 + 2 chloride + 2 O2 = dihydrogeodin + 2 FAD + 4 H2O + H(+)</text>
        <dbReference type="Rhea" id="RHEA:64312"/>
        <dbReference type="ChEBI" id="CHEBI:15377"/>
        <dbReference type="ChEBI" id="CHEBI:15378"/>
        <dbReference type="ChEBI" id="CHEBI:15379"/>
        <dbReference type="ChEBI" id="CHEBI:17996"/>
        <dbReference type="ChEBI" id="CHEBI:57692"/>
        <dbReference type="ChEBI" id="CHEBI:58307"/>
        <dbReference type="ChEBI" id="CHEBI:77639"/>
        <dbReference type="ChEBI" id="CHEBI:150012"/>
    </reaction>
    <physiologicalReaction direction="left-to-right" evidence="6">
        <dbReference type="Rhea" id="RHEA:64313"/>
    </physiologicalReaction>
</comment>
<comment type="pathway">
    <text evidence="6">Secondary metabolite biosynthesis.</text>
</comment>
<comment type="similarity">
    <text evidence="10">Belongs to the flavin-dependent halogenase family.</text>
</comment>
<comment type="sequence caution" evidence="11">
    <conflict type="erroneous gene model prediction">
        <sequence resource="EMBL-CDS" id="EAU31633"/>
    </conflict>
</comment>
<dbReference type="EC" id="1.14.19.-" evidence="6"/>
<dbReference type="EMBL" id="CH476605">
    <property type="protein sequence ID" value="EAU31633.1"/>
    <property type="status" value="ALT_SEQ"/>
    <property type="molecule type" value="Genomic_DNA"/>
</dbReference>
<dbReference type="RefSeq" id="XP_001217599.1">
    <property type="nucleotide sequence ID" value="XM_001217598.1"/>
</dbReference>
<dbReference type="SMR" id="Q0CCX4"/>
<dbReference type="STRING" id="341663.Q0CCX4"/>
<dbReference type="EnsemblFungi" id="EAU31633">
    <property type="protein sequence ID" value="EAU31633"/>
    <property type="gene ID" value="ATEG_08460"/>
</dbReference>
<dbReference type="GeneID" id="4353198"/>
<dbReference type="eggNOG" id="ENOG502QW6Y">
    <property type="taxonomic scope" value="Eukaryota"/>
</dbReference>
<dbReference type="HOGENOM" id="CLU_024648_4_2_1"/>
<dbReference type="OrthoDB" id="3340390at2759"/>
<dbReference type="BioCyc" id="MetaCyc:MONOMER-21294"/>
<dbReference type="Proteomes" id="UP000007963">
    <property type="component" value="Unassembled WGS sequence"/>
</dbReference>
<dbReference type="GO" id="GO:0140907">
    <property type="term" value="F:flavin-dependent halogenase activity"/>
    <property type="evidence" value="ECO:0000314"/>
    <property type="project" value="GO_Central"/>
</dbReference>
<dbReference type="GO" id="GO:0004497">
    <property type="term" value="F:monooxygenase activity"/>
    <property type="evidence" value="ECO:0007669"/>
    <property type="project" value="UniProtKB-KW"/>
</dbReference>
<dbReference type="GO" id="GO:0044550">
    <property type="term" value="P:secondary metabolite biosynthetic process"/>
    <property type="evidence" value="ECO:0000314"/>
    <property type="project" value="GO_Central"/>
</dbReference>
<dbReference type="Gene3D" id="3.50.50.60">
    <property type="entry name" value="FAD/NAD(P)-binding domain"/>
    <property type="match status" value="1"/>
</dbReference>
<dbReference type="InterPro" id="IPR036188">
    <property type="entry name" value="FAD/NAD-bd_sf"/>
</dbReference>
<dbReference type="InterPro" id="IPR050816">
    <property type="entry name" value="Flavin-dep_Halogenase_NPB"/>
</dbReference>
<dbReference type="InterPro" id="IPR006905">
    <property type="entry name" value="Flavin_halogenase"/>
</dbReference>
<dbReference type="PANTHER" id="PTHR43747:SF5">
    <property type="entry name" value="FAD-BINDING DOMAIN-CONTAINING PROTEIN"/>
    <property type="match status" value="1"/>
</dbReference>
<dbReference type="PANTHER" id="PTHR43747">
    <property type="entry name" value="FAD-BINDING PROTEIN"/>
    <property type="match status" value="1"/>
</dbReference>
<dbReference type="Pfam" id="PF04820">
    <property type="entry name" value="Trp_halogenase"/>
    <property type="match status" value="2"/>
</dbReference>
<dbReference type="PRINTS" id="PR00420">
    <property type="entry name" value="RNGMNOXGNASE"/>
</dbReference>
<dbReference type="SUPFAM" id="SSF51905">
    <property type="entry name" value="FAD/NAD(P)-binding domain"/>
    <property type="match status" value="1"/>
</dbReference>
<sequence length="548" mass="59940">MSVPNKTTVLVIGGGPAGSYAAAVLARENVDTVLLEAEKFPRYHIGESMLASMRFFLRFIDLEEQFDAYGFQKKYGATFKINSKREAYTDFSASLGPGGYAWNVIRSEADDLIFRYAGEQGAHIFDGTKVDDIEFLSYDGADGANFTPAAFLVNPGRPVAATWSRKDGTRGRIKFDYLIDASGRAGIISTKYLKNRTVNEGLRNIANWSYWKGAKVYGEGSDQQGSPFFEALTDGSGWCWAIPLHNGTLSVGVVMRQDLFFGKKKAAGSPGSLEMYKLCLQSVPGISGLLEDAEIVSDVKMASDWSYSASAYAGPHFRVAGDAGCFIDPYFSSGVHLALVGGLSAATTIQAVRRGETSEFSAAKWHSSKVTEGYTRFLLVVMAVLRQLRKQNAAVITDDKEEGFDTAFGLIQPVIQGQADTGESEQQRMVAGVQFSLERFGQATPEAQRALLDKVQFAGQNAEELEKLTADELAVLHNIIGRQLKMTKVEKNLDNFTRDVIDGWAPRVERGKLGLQRADTSIMTAEMKDLFQLNRSLDSTKAGIQLPA</sequence>
<keyword id="KW-0274">FAD</keyword>
<keyword id="KW-0285">Flavoprotein</keyword>
<keyword id="KW-0503">Monooxygenase</keyword>
<keyword id="KW-0560">Oxidoreductase</keyword>
<keyword id="KW-1185">Reference proteome</keyword>
<protein>
    <recommendedName>
        <fullName evidence="9">Sulochrin halogenase gedL</fullName>
        <ecNumber evidence="6">1.14.19.-</ecNumber>
    </recommendedName>
    <alternativeName>
        <fullName evidence="9">Flavin-dependent halogenase gedL</fullName>
    </alternativeName>
    <alternativeName>
        <fullName evidence="9">Geodin synthesis protein L</fullName>
    </alternativeName>
</protein>
<proteinExistence type="evidence at protein level"/>
<feature type="chain" id="PRO_0000437102" description="Sulochrin halogenase gedL">
    <location>
        <begin position="1"/>
        <end position="548"/>
    </location>
</feature>
<feature type="binding site" evidence="1">
    <location>
        <position position="14"/>
    </location>
    <ligand>
        <name>FAD</name>
        <dbReference type="ChEBI" id="CHEBI:57692"/>
    </ligand>
</feature>
<feature type="binding site" evidence="1">
    <location>
        <position position="17"/>
    </location>
    <ligand>
        <name>FAD</name>
        <dbReference type="ChEBI" id="CHEBI:57692"/>
    </ligand>
</feature>
<feature type="binding site" evidence="1">
    <location>
        <position position="47"/>
    </location>
    <ligand>
        <name>FAD</name>
        <dbReference type="ChEBI" id="CHEBI:57692"/>
    </ligand>
</feature>
<feature type="binding site" evidence="1">
    <location>
        <position position="333"/>
    </location>
    <ligand>
        <name>chloride</name>
        <dbReference type="ChEBI" id="CHEBI:17996"/>
    </ligand>
</feature>
<feature type="binding site" evidence="1">
    <location>
        <position position="334"/>
    </location>
    <ligand>
        <name>chloride</name>
        <dbReference type="ChEBI" id="CHEBI:17996"/>
    </ligand>
</feature>
<feature type="binding site" evidence="1">
    <location>
        <position position="335"/>
    </location>
    <ligand>
        <name>FAD</name>
        <dbReference type="ChEBI" id="CHEBI:57692"/>
    </ligand>
</feature>